<sequence length="83" mass="9722">MTKNQNQYQQPNPDDRSDNVEKLQDMVQNTIENIEEAEASMEFASGEDKQRIKEKNARREQSIEAFRNEIQDESAARQNGYRS</sequence>
<evidence type="ECO:0000256" key="1">
    <source>
        <dbReference type="SAM" id="MobiDB-lite"/>
    </source>
</evidence>
<evidence type="ECO:0000269" key="2">
    <source>
    </source>
</evidence>
<evidence type="ECO:0000269" key="3">
    <source>
    </source>
</evidence>
<evidence type="ECO:0000305" key="4"/>
<organism>
    <name type="scientific">Bacillus subtilis (strain 168)</name>
    <dbReference type="NCBI Taxonomy" id="224308"/>
    <lineage>
        <taxon>Bacteria</taxon>
        <taxon>Bacillati</taxon>
        <taxon>Bacillota</taxon>
        <taxon>Bacilli</taxon>
        <taxon>Bacillales</taxon>
        <taxon>Bacillaceae</taxon>
        <taxon>Bacillus</taxon>
    </lineage>
</organism>
<protein>
    <recommendedName>
        <fullName>Small, acid-soluble spore protein Tlp</fullName>
    </recommendedName>
</protein>
<keyword id="KW-0903">Direct protein sequencing</keyword>
<keyword id="KW-1185">Reference proteome</keyword>
<keyword id="KW-0749">Sporulation</keyword>
<accession>Q45060</accession>
<proteinExistence type="evidence at protein level"/>
<name>TLP_BACSU</name>
<feature type="initiator methionine" description="Removed" evidence="3">
    <location>
        <position position="1"/>
    </location>
</feature>
<feature type="chain" id="PRO_0000221502" description="Small, acid-soluble spore protein Tlp">
    <location>
        <begin position="2"/>
        <end position="83"/>
    </location>
</feature>
<feature type="region of interest" description="Disordered" evidence="1">
    <location>
        <begin position="37"/>
        <end position="60"/>
    </location>
</feature>
<feature type="compositionally biased region" description="Basic and acidic residues" evidence="1">
    <location>
        <begin position="46"/>
        <end position="60"/>
    </location>
</feature>
<reference key="1">
    <citation type="journal article" date="1996" name="Microbiology">
        <title>New genes in the 170 degrees region of the Bacillus subtilis genome encode DNA gyrase subunits, a thioredoxin, a xylanase and an amino acid transporter.</title>
        <authorList>
            <person name="Rose M."/>
            <person name="Entian K.-D."/>
        </authorList>
    </citation>
    <scope>NUCLEOTIDE SEQUENCE [GENOMIC DNA]</scope>
    <source>
        <strain>168</strain>
    </source>
</reference>
<reference key="2">
    <citation type="journal article" date="1997" name="Nature">
        <title>The complete genome sequence of the Gram-positive bacterium Bacillus subtilis.</title>
        <authorList>
            <person name="Kunst F."/>
            <person name="Ogasawara N."/>
            <person name="Moszer I."/>
            <person name="Albertini A.M."/>
            <person name="Alloni G."/>
            <person name="Azevedo V."/>
            <person name="Bertero M.G."/>
            <person name="Bessieres P."/>
            <person name="Bolotin A."/>
            <person name="Borchert S."/>
            <person name="Borriss R."/>
            <person name="Boursier L."/>
            <person name="Brans A."/>
            <person name="Braun M."/>
            <person name="Brignell S.C."/>
            <person name="Bron S."/>
            <person name="Brouillet S."/>
            <person name="Bruschi C.V."/>
            <person name="Caldwell B."/>
            <person name="Capuano V."/>
            <person name="Carter N.M."/>
            <person name="Choi S.-K."/>
            <person name="Codani J.-J."/>
            <person name="Connerton I.F."/>
            <person name="Cummings N.J."/>
            <person name="Daniel R.A."/>
            <person name="Denizot F."/>
            <person name="Devine K.M."/>
            <person name="Duesterhoeft A."/>
            <person name="Ehrlich S.D."/>
            <person name="Emmerson P.T."/>
            <person name="Entian K.-D."/>
            <person name="Errington J."/>
            <person name="Fabret C."/>
            <person name="Ferrari E."/>
            <person name="Foulger D."/>
            <person name="Fritz C."/>
            <person name="Fujita M."/>
            <person name="Fujita Y."/>
            <person name="Fuma S."/>
            <person name="Galizzi A."/>
            <person name="Galleron N."/>
            <person name="Ghim S.-Y."/>
            <person name="Glaser P."/>
            <person name="Goffeau A."/>
            <person name="Golightly E.J."/>
            <person name="Grandi G."/>
            <person name="Guiseppi G."/>
            <person name="Guy B.J."/>
            <person name="Haga K."/>
            <person name="Haiech J."/>
            <person name="Harwood C.R."/>
            <person name="Henaut A."/>
            <person name="Hilbert H."/>
            <person name="Holsappel S."/>
            <person name="Hosono S."/>
            <person name="Hullo M.-F."/>
            <person name="Itaya M."/>
            <person name="Jones L.-M."/>
            <person name="Joris B."/>
            <person name="Karamata D."/>
            <person name="Kasahara Y."/>
            <person name="Klaerr-Blanchard M."/>
            <person name="Klein C."/>
            <person name="Kobayashi Y."/>
            <person name="Koetter P."/>
            <person name="Koningstein G."/>
            <person name="Krogh S."/>
            <person name="Kumano M."/>
            <person name="Kurita K."/>
            <person name="Lapidus A."/>
            <person name="Lardinois S."/>
            <person name="Lauber J."/>
            <person name="Lazarevic V."/>
            <person name="Lee S.-M."/>
            <person name="Levine A."/>
            <person name="Liu H."/>
            <person name="Masuda S."/>
            <person name="Mauel C."/>
            <person name="Medigue C."/>
            <person name="Medina N."/>
            <person name="Mellado R.P."/>
            <person name="Mizuno M."/>
            <person name="Moestl D."/>
            <person name="Nakai S."/>
            <person name="Noback M."/>
            <person name="Noone D."/>
            <person name="O'Reilly M."/>
            <person name="Ogawa K."/>
            <person name="Ogiwara A."/>
            <person name="Oudega B."/>
            <person name="Park S.-H."/>
            <person name="Parro V."/>
            <person name="Pohl T.M."/>
            <person name="Portetelle D."/>
            <person name="Porwollik S."/>
            <person name="Prescott A.M."/>
            <person name="Presecan E."/>
            <person name="Pujic P."/>
            <person name="Purnelle B."/>
            <person name="Rapoport G."/>
            <person name="Rey M."/>
            <person name="Reynolds S."/>
            <person name="Rieger M."/>
            <person name="Rivolta C."/>
            <person name="Rocha E."/>
            <person name="Roche B."/>
            <person name="Rose M."/>
            <person name="Sadaie Y."/>
            <person name="Sato T."/>
            <person name="Scanlan E."/>
            <person name="Schleich S."/>
            <person name="Schroeter R."/>
            <person name="Scoffone F."/>
            <person name="Sekiguchi J."/>
            <person name="Sekowska A."/>
            <person name="Seror S.J."/>
            <person name="Serror P."/>
            <person name="Shin B.-S."/>
            <person name="Soldo B."/>
            <person name="Sorokin A."/>
            <person name="Tacconi E."/>
            <person name="Takagi T."/>
            <person name="Takahashi H."/>
            <person name="Takemaru K."/>
            <person name="Takeuchi M."/>
            <person name="Tamakoshi A."/>
            <person name="Tanaka T."/>
            <person name="Terpstra P."/>
            <person name="Tognoni A."/>
            <person name="Tosato V."/>
            <person name="Uchiyama S."/>
            <person name="Vandenbol M."/>
            <person name="Vannier F."/>
            <person name="Vassarotti A."/>
            <person name="Viari A."/>
            <person name="Wambutt R."/>
            <person name="Wedler E."/>
            <person name="Wedler H."/>
            <person name="Weitzenegger T."/>
            <person name="Winters P."/>
            <person name="Wipat A."/>
            <person name="Yamamoto H."/>
            <person name="Yamane K."/>
            <person name="Yasumoto K."/>
            <person name="Yata K."/>
            <person name="Yoshida K."/>
            <person name="Yoshikawa H.-F."/>
            <person name="Zumstein E."/>
            <person name="Yoshikawa H."/>
            <person name="Danchin A."/>
        </authorList>
    </citation>
    <scope>NUCLEOTIDE SEQUENCE [LARGE SCALE GENOMIC DNA]</scope>
    <source>
        <strain>168</strain>
    </source>
</reference>
<reference key="3">
    <citation type="journal article" date="1998" name="J. Bacteriol.">
        <title>New small, acid-soluble proteins unique to spores of Bacillus subtilis: identification of the coding genes and regulation and function of two of these genes.</title>
        <authorList>
            <person name="Bagyan I."/>
            <person name="Setlow B."/>
            <person name="Setlow P."/>
        </authorList>
    </citation>
    <scope>PROTEIN SEQUENCE OF 2-12</scope>
    <scope>SUBCELLULAR LOCATION</scope>
</reference>
<reference key="4">
    <citation type="journal article" date="1999" name="Gene">
        <title>Regulation of four genes encoding small, acid-soluble spore proteins in Bacillus subtilis.</title>
        <authorList>
            <person name="Cabrera-Hernandez A."/>
            <person name="Sanchez-Salas J.-L."/>
            <person name="Paidhungat M."/>
            <person name="Setlow P."/>
        </authorList>
    </citation>
    <scope>INDUCTION</scope>
</reference>
<dbReference type="EMBL" id="Z73234">
    <property type="protein sequence ID" value="CAA97600.1"/>
    <property type="molecule type" value="Genomic_DNA"/>
</dbReference>
<dbReference type="EMBL" id="AL009126">
    <property type="protein sequence ID" value="CAB13686.1"/>
    <property type="molecule type" value="Genomic_DNA"/>
</dbReference>
<dbReference type="PIR" id="C69724">
    <property type="entry name" value="C69724"/>
</dbReference>
<dbReference type="RefSeq" id="WP_003231568.1">
    <property type="nucleotide sequence ID" value="NZ_OZ025638.1"/>
</dbReference>
<dbReference type="SMR" id="Q45060"/>
<dbReference type="FunCoup" id="Q45060">
    <property type="interactions" value="52"/>
</dbReference>
<dbReference type="STRING" id="224308.BSU18030"/>
<dbReference type="PaxDb" id="224308-BSU18030"/>
<dbReference type="EnsemblBacteria" id="CAB13686">
    <property type="protein sequence ID" value="CAB13686"/>
    <property type="gene ID" value="BSU_18030"/>
</dbReference>
<dbReference type="GeneID" id="938091"/>
<dbReference type="KEGG" id="bsu:BSU18030"/>
<dbReference type="PATRIC" id="fig|224308.179.peg.1965"/>
<dbReference type="eggNOG" id="ENOG50330RR">
    <property type="taxonomic scope" value="Bacteria"/>
</dbReference>
<dbReference type="InParanoid" id="Q45060"/>
<dbReference type="OrthoDB" id="1799076at2"/>
<dbReference type="BioCyc" id="BSUB:BSU18030-MONOMER"/>
<dbReference type="Proteomes" id="UP000001570">
    <property type="component" value="Chromosome"/>
</dbReference>
<dbReference type="GO" id="GO:0030436">
    <property type="term" value="P:asexual sporulation"/>
    <property type="evidence" value="ECO:0007669"/>
    <property type="project" value="UniProtKB-UniRule"/>
</dbReference>
<dbReference type="GO" id="GO:0030435">
    <property type="term" value="P:sporulation resulting in formation of a cellular spore"/>
    <property type="evidence" value="ECO:0007669"/>
    <property type="project" value="UniProtKB-KW"/>
</dbReference>
<dbReference type="HAMAP" id="MF_01506">
    <property type="entry name" value="Tlp"/>
    <property type="match status" value="1"/>
</dbReference>
<dbReference type="InterPro" id="IPR017524">
    <property type="entry name" value="SASP_thioredoxin-like"/>
</dbReference>
<dbReference type="NCBIfam" id="TIGR03090">
    <property type="entry name" value="SASP_tlp"/>
    <property type="match status" value="1"/>
</dbReference>
<dbReference type="Pfam" id="PF19824">
    <property type="entry name" value="Tlp"/>
    <property type="match status" value="1"/>
</dbReference>
<comment type="subcellular location">
    <subcellularLocation>
        <location evidence="3">Spore core</location>
    </subcellularLocation>
</comment>
<comment type="induction">
    <text evidence="2">Expressed only in the forespore compartment of sporulating cells. Disappears after 45 minutes of spore germination. Expression is sigma F and sigma G-dependent.</text>
</comment>
<comment type="similarity">
    <text evidence="4">Belongs to the Tlp family.</text>
</comment>
<gene>
    <name type="primary">tlp</name>
    <name type="synonym">tlpA</name>
    <name type="ordered locus">BSU18030</name>
</gene>